<accession>Q9FJW5</accession>
<accession>Q8VX38</accession>
<organism>
    <name type="scientific">Arabidopsis thaliana</name>
    <name type="common">Mouse-ear cress</name>
    <dbReference type="NCBI Taxonomy" id="3702"/>
    <lineage>
        <taxon>Eukaryota</taxon>
        <taxon>Viridiplantae</taxon>
        <taxon>Streptophyta</taxon>
        <taxon>Embryophyta</taxon>
        <taxon>Tracheophyta</taxon>
        <taxon>Spermatophyta</taxon>
        <taxon>Magnoliopsida</taxon>
        <taxon>eudicotyledons</taxon>
        <taxon>Gunneridae</taxon>
        <taxon>Pentapetalae</taxon>
        <taxon>rosids</taxon>
        <taxon>malvids</taxon>
        <taxon>Brassicales</taxon>
        <taxon>Brassicaceae</taxon>
        <taxon>Camelineae</taxon>
        <taxon>Arabidopsis</taxon>
    </lineage>
</organism>
<dbReference type="EMBL" id="U83836">
    <property type="protein sequence ID" value="AAL73442.1"/>
    <property type="molecule type" value="Genomic_DNA"/>
</dbReference>
<dbReference type="EMBL" id="U83837">
    <property type="protein sequence ID" value="AAL73441.1"/>
    <property type="molecule type" value="mRNA"/>
</dbReference>
<dbReference type="EMBL" id="AY519545">
    <property type="protein sequence ID" value="AAS10015.1"/>
    <property type="molecule type" value="mRNA"/>
</dbReference>
<dbReference type="EMBL" id="AB013390">
    <property type="protein sequence ID" value="BAB08466.1"/>
    <property type="molecule type" value="Genomic_DNA"/>
</dbReference>
<dbReference type="EMBL" id="CP002688">
    <property type="protein sequence ID" value="AED98362.1"/>
    <property type="molecule type" value="Genomic_DNA"/>
</dbReference>
<dbReference type="EMBL" id="CP002688">
    <property type="protein sequence ID" value="AED98363.1"/>
    <property type="molecule type" value="Genomic_DNA"/>
</dbReference>
<dbReference type="EMBL" id="AY039883">
    <property type="protein sequence ID" value="AAK63987.1"/>
    <property type="molecule type" value="mRNA"/>
</dbReference>
<dbReference type="EMBL" id="AY077668">
    <property type="protein sequence ID" value="AAL76146.1"/>
    <property type="molecule type" value="mRNA"/>
</dbReference>
<dbReference type="RefSeq" id="NP_201559.1">
    <property type="nucleotide sequence ID" value="NM_126158.3"/>
</dbReference>
<dbReference type="RefSeq" id="NP_851286.1">
    <property type="nucleotide sequence ID" value="NM_180955.3"/>
</dbReference>
<dbReference type="BMRB" id="Q9FJW5"/>
<dbReference type="SMR" id="Q9FJW5"/>
<dbReference type="BioGRID" id="22136">
    <property type="interactions" value="15"/>
</dbReference>
<dbReference type="FunCoup" id="Q9FJW5">
    <property type="interactions" value="215"/>
</dbReference>
<dbReference type="IntAct" id="Q9FJW5">
    <property type="interactions" value="13"/>
</dbReference>
<dbReference type="MINT" id="Q9FJW5"/>
<dbReference type="STRING" id="3702.Q9FJW5"/>
<dbReference type="iPTMnet" id="Q9FJW5"/>
<dbReference type="PaxDb" id="3702-AT5G67580.1"/>
<dbReference type="ProteomicsDB" id="228388"/>
<dbReference type="EnsemblPlants" id="AT5G67580.1">
    <property type="protein sequence ID" value="AT5G67580.1"/>
    <property type="gene ID" value="AT5G67580"/>
</dbReference>
<dbReference type="EnsemblPlants" id="AT5G67580.2">
    <property type="protein sequence ID" value="AT5G67580.2"/>
    <property type="gene ID" value="AT5G67580"/>
</dbReference>
<dbReference type="GeneID" id="836894"/>
<dbReference type="Gramene" id="AT5G67580.1">
    <property type="protein sequence ID" value="AT5G67580.1"/>
    <property type="gene ID" value="AT5G67580"/>
</dbReference>
<dbReference type="Gramene" id="AT5G67580.2">
    <property type="protein sequence ID" value="AT5G67580.2"/>
    <property type="gene ID" value="AT5G67580"/>
</dbReference>
<dbReference type="KEGG" id="ath:AT5G67580"/>
<dbReference type="Araport" id="AT5G67580"/>
<dbReference type="TAIR" id="AT5G67580">
    <property type="gene designation" value="TRB2"/>
</dbReference>
<dbReference type="eggNOG" id="ENOG502QSU2">
    <property type="taxonomic scope" value="Eukaryota"/>
</dbReference>
<dbReference type="HOGENOM" id="CLU_047477_0_1_1"/>
<dbReference type="InParanoid" id="Q9FJW5"/>
<dbReference type="OMA" id="ALKFRIR"/>
<dbReference type="PhylomeDB" id="Q9FJW5"/>
<dbReference type="PRO" id="PR:Q9FJW5"/>
<dbReference type="Proteomes" id="UP000006548">
    <property type="component" value="Chromosome 5"/>
</dbReference>
<dbReference type="ExpressionAtlas" id="Q9FJW5">
    <property type="expression patterns" value="baseline and differential"/>
</dbReference>
<dbReference type="GO" id="GO:0000785">
    <property type="term" value="C:chromatin"/>
    <property type="evidence" value="ECO:0000314"/>
    <property type="project" value="UniProtKB"/>
</dbReference>
<dbReference type="GO" id="GO:0005730">
    <property type="term" value="C:nucleolus"/>
    <property type="evidence" value="ECO:0000314"/>
    <property type="project" value="UniProtKB"/>
</dbReference>
<dbReference type="GO" id="GO:0000786">
    <property type="term" value="C:nucleosome"/>
    <property type="evidence" value="ECO:0007669"/>
    <property type="project" value="InterPro"/>
</dbReference>
<dbReference type="GO" id="GO:0005634">
    <property type="term" value="C:nucleus"/>
    <property type="evidence" value="ECO:0000314"/>
    <property type="project" value="UniProtKB"/>
</dbReference>
<dbReference type="GO" id="GO:0003700">
    <property type="term" value="F:DNA-binding transcription factor activity"/>
    <property type="evidence" value="ECO:0000250"/>
    <property type="project" value="TAIR"/>
</dbReference>
<dbReference type="GO" id="GO:0003691">
    <property type="term" value="F:double-stranded telomeric DNA binding"/>
    <property type="evidence" value="ECO:0000314"/>
    <property type="project" value="TAIR"/>
</dbReference>
<dbReference type="GO" id="GO:0042803">
    <property type="term" value="F:protein homodimerization activity"/>
    <property type="evidence" value="ECO:0000353"/>
    <property type="project" value="UniProtKB"/>
</dbReference>
<dbReference type="GO" id="GO:0043047">
    <property type="term" value="F:single-stranded telomeric DNA binding"/>
    <property type="evidence" value="ECO:0000314"/>
    <property type="project" value="TAIR"/>
</dbReference>
<dbReference type="GO" id="GO:0042162">
    <property type="term" value="F:telomeric DNA binding"/>
    <property type="evidence" value="ECO:0000314"/>
    <property type="project" value="TAIR"/>
</dbReference>
<dbReference type="GO" id="GO:0000976">
    <property type="term" value="F:transcription cis-regulatory region binding"/>
    <property type="evidence" value="ECO:0000353"/>
    <property type="project" value="TAIR"/>
</dbReference>
<dbReference type="GO" id="GO:0006334">
    <property type="term" value="P:nucleosome assembly"/>
    <property type="evidence" value="ECO:0007669"/>
    <property type="project" value="InterPro"/>
</dbReference>
<dbReference type="CDD" id="cd11660">
    <property type="entry name" value="SANT_TRF"/>
    <property type="match status" value="1"/>
</dbReference>
<dbReference type="FunFam" id="1.10.10.10:FF:000937">
    <property type="entry name" value="Telomere repeat-binding factor 1"/>
    <property type="match status" value="1"/>
</dbReference>
<dbReference type="FunFam" id="1.10.10.60:FF:000168">
    <property type="entry name" value="Telomere repeat-binding factor 1"/>
    <property type="match status" value="1"/>
</dbReference>
<dbReference type="Gene3D" id="1.10.10.60">
    <property type="entry name" value="Homeodomain-like"/>
    <property type="match status" value="1"/>
</dbReference>
<dbReference type="Gene3D" id="1.10.10.10">
    <property type="entry name" value="Winged helix-like DNA-binding domain superfamily/Winged helix DNA-binding domain"/>
    <property type="match status" value="1"/>
</dbReference>
<dbReference type="InterPro" id="IPR005818">
    <property type="entry name" value="Histone_H1/H5_H15"/>
</dbReference>
<dbReference type="InterPro" id="IPR009057">
    <property type="entry name" value="Homeodomain-like_sf"/>
</dbReference>
<dbReference type="InterPro" id="IPR017930">
    <property type="entry name" value="Myb_dom"/>
</dbReference>
<dbReference type="InterPro" id="IPR001005">
    <property type="entry name" value="SANT/Myb"/>
</dbReference>
<dbReference type="InterPro" id="IPR044597">
    <property type="entry name" value="SMH1-6"/>
</dbReference>
<dbReference type="InterPro" id="IPR036388">
    <property type="entry name" value="WH-like_DNA-bd_sf"/>
</dbReference>
<dbReference type="InterPro" id="IPR036390">
    <property type="entry name" value="WH_DNA-bd_sf"/>
</dbReference>
<dbReference type="PANTHER" id="PTHR46267">
    <property type="entry name" value="SINGLE MYB HISTONE 4"/>
    <property type="match status" value="1"/>
</dbReference>
<dbReference type="PANTHER" id="PTHR46267:SF11">
    <property type="entry name" value="TELOMERE REPEAT-BINDING FACTOR 2"/>
    <property type="match status" value="1"/>
</dbReference>
<dbReference type="Pfam" id="PF00538">
    <property type="entry name" value="Linker_histone"/>
    <property type="match status" value="1"/>
</dbReference>
<dbReference type="Pfam" id="PF00249">
    <property type="entry name" value="Myb_DNA-binding"/>
    <property type="match status" value="1"/>
</dbReference>
<dbReference type="SMART" id="SM00526">
    <property type="entry name" value="H15"/>
    <property type="match status" value="1"/>
</dbReference>
<dbReference type="SMART" id="SM00717">
    <property type="entry name" value="SANT"/>
    <property type="match status" value="1"/>
</dbReference>
<dbReference type="SUPFAM" id="SSF46689">
    <property type="entry name" value="Homeodomain-like"/>
    <property type="match status" value="1"/>
</dbReference>
<dbReference type="SUPFAM" id="SSF46785">
    <property type="entry name" value="Winged helix' DNA-binding domain"/>
    <property type="match status" value="1"/>
</dbReference>
<dbReference type="PROSITE" id="PS51504">
    <property type="entry name" value="H15"/>
    <property type="match status" value="1"/>
</dbReference>
<dbReference type="PROSITE" id="PS51294">
    <property type="entry name" value="HTH_MYB"/>
    <property type="match status" value="1"/>
</dbReference>
<feature type="chain" id="PRO_0000417011" description="Telomere repeat-binding factor 2">
    <location>
        <begin position="1"/>
        <end position="299"/>
    </location>
</feature>
<feature type="domain" description="HTH myb-type" evidence="3">
    <location>
        <begin position="1"/>
        <end position="61"/>
    </location>
</feature>
<feature type="domain" description="H15" evidence="4">
    <location>
        <begin position="121"/>
        <end position="189"/>
    </location>
</feature>
<feature type="DNA-binding region" description="H-T-H motif" evidence="3">
    <location>
        <begin position="28"/>
        <end position="57"/>
    </location>
</feature>
<feature type="region of interest" description="Disordered" evidence="5">
    <location>
        <begin position="93"/>
        <end position="116"/>
    </location>
</feature>
<feature type="coiled-coil region" evidence="2">
    <location>
        <begin position="243"/>
        <end position="288"/>
    </location>
</feature>
<feature type="sequence conflict" description="In Ref. 1; AAL73441." evidence="10" ref="1">
    <original>T</original>
    <variation>S</variation>
    <location>
        <position position="35"/>
    </location>
</feature>
<gene>
    <name type="primary">TRB2</name>
    <name type="synonym">TBP3</name>
    <name type="ordered locus">At5g67580</name>
    <name type="ORF">K9I9.15</name>
</gene>
<reference key="1">
    <citation type="submission" date="1997-01" db="EMBL/GenBank/DDBJ databases">
        <title>Identification and functional characterisation of the Arabidopsis telomere repeat binding factor TRB2.</title>
        <authorList>
            <person name="Sprenger M."/>
            <person name="Weisshaar B."/>
        </authorList>
    </citation>
    <scope>NUCLEOTIDE SEQUENCE [GENOMIC DNA / MRNA]</scope>
    <source>
        <strain>cv. Columbia</strain>
        <strain>cv. Landsberg erecta</strain>
    </source>
</reference>
<reference key="2">
    <citation type="submission" date="2004-01" db="EMBL/GenBank/DDBJ databases">
        <title>The MYB transcription factor family in Arabidopsis: a genome-wide cloning and expression pattern analysis.</title>
        <authorList>
            <person name="Qu L.-J."/>
            <person name="Gu H."/>
        </authorList>
    </citation>
    <scope>NUCLEOTIDE SEQUENCE [MRNA]</scope>
</reference>
<reference key="3">
    <citation type="journal article" date="1998" name="DNA Res.">
        <title>Structural analysis of Arabidopsis thaliana chromosome 5. VI. Sequence features of the regions of 1,367,185 bp covered by 19 physically assigned P1 and TAC clones.</title>
        <authorList>
            <person name="Kotani H."/>
            <person name="Nakamura Y."/>
            <person name="Sato S."/>
            <person name="Asamizu E."/>
            <person name="Kaneko T."/>
            <person name="Miyajima N."/>
            <person name="Tabata S."/>
        </authorList>
    </citation>
    <scope>NUCLEOTIDE SEQUENCE [LARGE SCALE GENOMIC DNA]</scope>
    <source>
        <strain>cv. Columbia</strain>
    </source>
</reference>
<reference key="4">
    <citation type="journal article" date="2017" name="Plant J.">
        <title>Araport11: a complete reannotation of the Arabidopsis thaliana reference genome.</title>
        <authorList>
            <person name="Cheng C.Y."/>
            <person name="Krishnakumar V."/>
            <person name="Chan A.P."/>
            <person name="Thibaud-Nissen F."/>
            <person name="Schobel S."/>
            <person name="Town C.D."/>
        </authorList>
    </citation>
    <scope>GENOME REANNOTATION</scope>
    <source>
        <strain>cv. Columbia</strain>
    </source>
</reference>
<reference key="5">
    <citation type="journal article" date="2003" name="Science">
        <title>Empirical analysis of transcriptional activity in the Arabidopsis genome.</title>
        <authorList>
            <person name="Yamada K."/>
            <person name="Lim J."/>
            <person name="Dale J.M."/>
            <person name="Chen H."/>
            <person name="Shinn P."/>
            <person name="Palm C.J."/>
            <person name="Southwick A.M."/>
            <person name="Wu H.C."/>
            <person name="Kim C.J."/>
            <person name="Nguyen M."/>
            <person name="Pham P.K."/>
            <person name="Cheuk R.F."/>
            <person name="Karlin-Newmann G."/>
            <person name="Liu S.X."/>
            <person name="Lam B."/>
            <person name="Sakano H."/>
            <person name="Wu T."/>
            <person name="Yu G."/>
            <person name="Miranda M."/>
            <person name="Quach H.L."/>
            <person name="Tripp M."/>
            <person name="Chang C.H."/>
            <person name="Lee J.M."/>
            <person name="Toriumi M.J."/>
            <person name="Chan M.M."/>
            <person name="Tang C.C."/>
            <person name="Onodera C.S."/>
            <person name="Deng J.M."/>
            <person name="Akiyama K."/>
            <person name="Ansari Y."/>
            <person name="Arakawa T."/>
            <person name="Banh J."/>
            <person name="Banno F."/>
            <person name="Bowser L."/>
            <person name="Brooks S.Y."/>
            <person name="Carninci P."/>
            <person name="Chao Q."/>
            <person name="Choy N."/>
            <person name="Enju A."/>
            <person name="Goldsmith A.D."/>
            <person name="Gurjal M."/>
            <person name="Hansen N.F."/>
            <person name="Hayashizaki Y."/>
            <person name="Johnson-Hopson C."/>
            <person name="Hsuan V.W."/>
            <person name="Iida K."/>
            <person name="Karnes M."/>
            <person name="Khan S."/>
            <person name="Koesema E."/>
            <person name="Ishida J."/>
            <person name="Jiang P.X."/>
            <person name="Jones T."/>
            <person name="Kawai J."/>
            <person name="Kamiya A."/>
            <person name="Meyers C."/>
            <person name="Nakajima M."/>
            <person name="Narusaka M."/>
            <person name="Seki M."/>
            <person name="Sakurai T."/>
            <person name="Satou M."/>
            <person name="Tamse R."/>
            <person name="Vaysberg M."/>
            <person name="Wallender E.K."/>
            <person name="Wong C."/>
            <person name="Yamamura Y."/>
            <person name="Yuan S."/>
            <person name="Shinozaki K."/>
            <person name="Davis R.W."/>
            <person name="Theologis A."/>
            <person name="Ecker J.R."/>
        </authorList>
    </citation>
    <scope>NUCLEOTIDE SEQUENCE [LARGE SCALE MRNA]</scope>
    <source>
        <strain>cv. Columbia</strain>
    </source>
</reference>
<reference key="6">
    <citation type="journal article" date="2003" name="Plant Physiol.">
        <title>The maize Single myb histone 1 gene, Smh1, belongs to a novel gene family and encodes a protein that binds telomere DNA repeats in vitro.</title>
        <authorList>
            <person name="Marian C.O."/>
            <person name="Bordoli S.J."/>
            <person name="Goltz M."/>
            <person name="Santarella R.A."/>
            <person name="Jackson L.P."/>
            <person name="Danilevskaya O."/>
            <person name="Beckstette M."/>
            <person name="Meeley R."/>
            <person name="Bass H.W."/>
        </authorList>
    </citation>
    <scope>GENE FAMILY</scope>
</reference>
<reference key="7">
    <citation type="journal article" date="2004" name="FEBS Lett.">
        <title>Interactions of putative telomere-binding proteins in Arabidopsis thaliana: identification of functional TRF2 homolog in plants.</title>
        <authorList>
            <person name="Kuchar M."/>
            <person name="Fajkus J."/>
        </authorList>
    </citation>
    <scope>HOMOMULTIMERIZATION</scope>
    <scope>INTERACTION WITH TRB1 AND TRB3</scope>
</reference>
<reference key="8">
    <citation type="journal article" date="2004" name="Genome">
        <title>Characterization of two Arabidopsis thaliana myb-like proteins showing affinity to telomeric DNA sequence.</title>
        <authorList>
            <person name="Schrumpfova P."/>
            <person name="Kuchar M."/>
            <person name="Mikova G."/>
            <person name="Skrisovska L."/>
            <person name="Kubicarova T."/>
            <person name="Fajkus J."/>
        </authorList>
    </citation>
    <scope>TISSUE SPECIFICITY</scope>
    <scope>HOMODIMERIZATION</scope>
    <scope>INTERACTION WITH TRB3</scope>
    <scope>DNA-BINDING</scope>
</reference>
<reference key="9">
    <citation type="journal article" date="2006" name="Plant Mol. Biol.">
        <title>The MYB transcription factor superfamily of Arabidopsis: expression analysis and phylogenetic comparison with the rice MYB family.</title>
        <authorList>
            <person name="Chen Y."/>
            <person name="Yang X."/>
            <person name="He K."/>
            <person name="Liu M."/>
            <person name="Li J."/>
            <person name="Gao Z."/>
            <person name="Lin Z."/>
            <person name="Zhang Y."/>
            <person name="Wang X."/>
            <person name="Qiu X."/>
            <person name="Shen Y."/>
            <person name="Zhang L."/>
            <person name="Deng X."/>
            <person name="Luo J."/>
            <person name="Deng X.-W."/>
            <person name="Chen Z."/>
            <person name="Gu H."/>
            <person name="Qu L.-J."/>
        </authorList>
    </citation>
    <scope>GENE FAMILY</scope>
</reference>
<reference key="10">
    <citation type="journal article" date="2008" name="FEBS Lett.">
        <title>Mapping of interaction domains of putative telomere-binding proteins AtTRB1 and AtPOT1b from Arabidopsis thaliana.</title>
        <authorList>
            <person name="Schrumpfova P.P."/>
            <person name="Kuchar M."/>
            <person name="Palecek J."/>
            <person name="Fajkus J."/>
        </authorList>
    </citation>
    <scope>INTERACTION WITH TRB1</scope>
</reference>
<reference key="11">
    <citation type="journal article" date="2010" name="Plant J.">
        <title>AtTRB1, a telomeric DNA-binding protein from Arabidopsis, is concentrated in the nucleolus and shows highly dynamic association with chromatin.</title>
        <authorList>
            <person name="Dvorackova M."/>
            <person name="Rossignol P."/>
            <person name="Shaw P.J."/>
            <person name="Koroleva O.A."/>
            <person name="Doonan J.H."/>
            <person name="Fajkus J."/>
        </authorList>
    </citation>
    <scope>SUBCELLULAR LOCATION</scope>
</reference>
<sequence length="299" mass="33014">MGAPKQKWTPEEEAALKAGVLKHGTGKWRTILSDTEFSLILKSRSNVDLKDKWRNISVTALWGSRKKAKLALKRTPPGTKQDDNNTALTIVALTNDDERAKPTSPGGSGGGSPRTCASKRSITSLDKIIFEAITNLRELRGSDRTSIFLYIEENFKTPPNMKRHVAVRLKHLSSNGTLVKIKHKYRFSSNFIPAGARQKAPQLFLEGNNKKDPTKPEENGANSLTKFRVDGELYMIKGMTAQEAAEAAARAVAEAEFAITEAEQAAKEAERAEAEAEAAQIFAKAAMKALKFRIRNHPW</sequence>
<protein>
    <recommendedName>
        <fullName>Telomere repeat-binding factor 2</fullName>
        <shortName>AtTRB2</shortName>
    </recommendedName>
    <alternativeName>
        <fullName>MYB transcription factor</fullName>
    </alternativeName>
    <alternativeName>
        <fullName>Telomere-binding protein 3</fullName>
        <shortName>AtTBP3</shortName>
    </alternativeName>
</protein>
<proteinExistence type="evidence at protein level"/>
<evidence type="ECO:0000250" key="1"/>
<evidence type="ECO:0000255" key="2"/>
<evidence type="ECO:0000255" key="3">
    <source>
        <dbReference type="PROSITE-ProRule" id="PRU00625"/>
    </source>
</evidence>
<evidence type="ECO:0000255" key="4">
    <source>
        <dbReference type="PROSITE-ProRule" id="PRU00837"/>
    </source>
</evidence>
<evidence type="ECO:0000256" key="5">
    <source>
        <dbReference type="SAM" id="MobiDB-lite"/>
    </source>
</evidence>
<evidence type="ECO:0000269" key="6">
    <source>
    </source>
</evidence>
<evidence type="ECO:0000269" key="7">
    <source>
    </source>
</evidence>
<evidence type="ECO:0000269" key="8">
    <source>
    </source>
</evidence>
<evidence type="ECO:0000269" key="9">
    <source>
    </source>
</evidence>
<evidence type="ECO:0000305" key="10"/>
<name>TRB2_ARATH</name>
<keyword id="KW-0158">Chromosome</keyword>
<keyword id="KW-0175">Coiled coil</keyword>
<keyword id="KW-0238">DNA-binding</keyword>
<keyword id="KW-0539">Nucleus</keyword>
<keyword id="KW-1185">Reference proteome</keyword>
<keyword id="KW-0804">Transcription</keyword>
<keyword id="KW-0805">Transcription regulation</keyword>
<comment type="function">
    <text>Binds preferentially double-stranded telomeric repeats, but it can also bind to the single G-rich telomeric strand.</text>
</comment>
<comment type="subunit">
    <text evidence="6 7 8">Forms a homodimer and heterodimers with TRB1 or TRB3. Interacts with TRB1 and TRB3.</text>
</comment>
<comment type="interaction">
    <interactant intactId="EBI-476115">
        <id>Q9FJW5</id>
    </interactant>
    <interactant intactId="EBI-476101">
        <id>Q8VWK4</id>
        <label>TRB1</label>
    </interactant>
    <organismsDiffer>false</organismsDiffer>
    <experiments>4</experiments>
</comment>
<comment type="subcellular location">
    <subcellularLocation>
        <location evidence="3 4 9">Nucleus</location>
    </subcellularLocation>
    <subcellularLocation>
        <location evidence="9">Nucleus</location>
        <location evidence="9">Nucleolus</location>
    </subcellularLocation>
    <subcellularLocation>
        <location evidence="4 9">Chromosome</location>
    </subcellularLocation>
    <text>Localized to the nucleolus during interphase.</text>
</comment>
<comment type="tissue specificity">
    <text evidence="6">Ubiquitous.</text>
</comment>
<comment type="domain">
    <text evidence="1">HTH myb-type domain confers double-stranded telomeric DNA-binding while the H15 domain is involved in non-specific DNA-protein interaction and multimerization.</text>
</comment>
<comment type="similarity">
    <text evidence="4">Belongs to the histone H1/H5 family. SMH subfamily.</text>
</comment>